<gene>
    <name evidence="1" type="primary">FEN1</name>
    <name type="ordered locus">ECU03_1080</name>
</gene>
<evidence type="ECO:0000255" key="1">
    <source>
        <dbReference type="HAMAP-Rule" id="MF_03140"/>
    </source>
</evidence>
<feature type="chain" id="PRO_0000403577" description="Flap endonuclease 1">
    <location>
        <begin position="1"/>
        <end position="345"/>
    </location>
</feature>
<feature type="region of interest" description="N-domain">
    <location>
        <begin position="1"/>
        <end position="103"/>
    </location>
</feature>
<feature type="region of interest" description="I-domain">
    <location>
        <begin position="121"/>
        <end position="252"/>
    </location>
</feature>
<feature type="region of interest" description="Interaction with PCNA" evidence="1">
    <location>
        <begin position="333"/>
        <end position="341"/>
    </location>
</feature>
<feature type="binding site" evidence="1">
    <location>
        <position position="34"/>
    </location>
    <ligand>
        <name>Mg(2+)</name>
        <dbReference type="ChEBI" id="CHEBI:18420"/>
        <label>1</label>
    </ligand>
</feature>
<feature type="binding site" evidence="1">
    <location>
        <position position="47"/>
    </location>
    <ligand>
        <name>DNA</name>
        <dbReference type="ChEBI" id="CHEBI:16991"/>
    </ligand>
</feature>
<feature type="binding site" evidence="1">
    <location>
        <position position="69"/>
    </location>
    <ligand>
        <name>DNA</name>
        <dbReference type="ChEBI" id="CHEBI:16991"/>
    </ligand>
</feature>
<feature type="binding site" evidence="1">
    <location>
        <position position="85"/>
    </location>
    <ligand>
        <name>Mg(2+)</name>
        <dbReference type="ChEBI" id="CHEBI:18420"/>
        <label>1</label>
    </ligand>
</feature>
<feature type="binding site" evidence="1">
    <location>
        <position position="157"/>
    </location>
    <ligand>
        <name>DNA</name>
        <dbReference type="ChEBI" id="CHEBI:16991"/>
    </ligand>
</feature>
<feature type="binding site" evidence="1">
    <location>
        <position position="157"/>
    </location>
    <ligand>
        <name>Mg(2+)</name>
        <dbReference type="ChEBI" id="CHEBI:18420"/>
        <label>1</label>
    </ligand>
</feature>
<feature type="binding site" evidence="1">
    <location>
        <position position="159"/>
    </location>
    <ligand>
        <name>Mg(2+)</name>
        <dbReference type="ChEBI" id="CHEBI:18420"/>
        <label>1</label>
    </ligand>
</feature>
<feature type="binding site" evidence="1">
    <location>
        <position position="178"/>
    </location>
    <ligand>
        <name>Mg(2+)</name>
        <dbReference type="ChEBI" id="CHEBI:18420"/>
        <label>2</label>
    </ligand>
</feature>
<feature type="binding site" evidence="1">
    <location>
        <position position="180"/>
    </location>
    <ligand>
        <name>Mg(2+)</name>
        <dbReference type="ChEBI" id="CHEBI:18420"/>
        <label>2</label>
    </ligand>
</feature>
<feature type="binding site" evidence="1">
    <location>
        <position position="230"/>
    </location>
    <ligand>
        <name>DNA</name>
        <dbReference type="ChEBI" id="CHEBI:16991"/>
    </ligand>
</feature>
<feature type="binding site" evidence="1">
    <location>
        <position position="232"/>
    </location>
    <ligand>
        <name>DNA</name>
        <dbReference type="ChEBI" id="CHEBI:16991"/>
    </ligand>
</feature>
<feature type="binding site" evidence="1">
    <location>
        <position position="232"/>
    </location>
    <ligand>
        <name>Mg(2+)</name>
        <dbReference type="ChEBI" id="CHEBI:18420"/>
        <label>2</label>
    </ligand>
</feature>
<comment type="function">
    <text evidence="1">Structure-specific nuclease with 5'-flap endonuclease and 5'-3' exonuclease activities involved in DNA replication and repair. During DNA replication, cleaves the 5'-overhanging flap structure that is generated by displacement synthesis when DNA polymerase encounters the 5'-end of a downstream Okazaki fragment. It enters the flap from the 5'-end and then tracks to cleave the flap base, leaving a nick for ligation. Also involved in the long patch base excision repair (LP-BER) pathway, by cleaving within the apurinic/apyrimidinic (AP) site-terminated flap. Acts as a genome stabilization factor that prevents flaps from equilibrating into structures that lead to duplications and deletions. Also possesses 5'-3' exonuclease activity on nicked or gapped double-stranded DNA, and exhibits RNase H activity. Also involved in replication and repair of rDNA and in repairing mitochondrial DNA.</text>
</comment>
<comment type="cofactor">
    <cofactor evidence="1">
        <name>Mg(2+)</name>
        <dbReference type="ChEBI" id="CHEBI:18420"/>
    </cofactor>
    <text evidence="1">Binds 2 magnesium ions per subunit. They probably participate in the reaction catalyzed by the enzyme. May bind an additional third magnesium ion after substrate binding.</text>
</comment>
<comment type="subunit">
    <text evidence="1">Interacts with PCNA. Three molecules of FEN1 bind to one PCNA trimer with each molecule binding to one PCNA monomer. PCNA stimulates the nuclease activity without altering cleavage specificity.</text>
</comment>
<comment type="subcellular location">
    <subcellularLocation>
        <location evidence="1">Nucleus</location>
        <location evidence="1">Nucleolus</location>
    </subcellularLocation>
    <subcellularLocation>
        <location evidence="1">Nucleus</location>
        <location evidence="1">Nucleoplasm</location>
    </subcellularLocation>
    <subcellularLocation>
        <location evidence="1">Mitochondrion</location>
    </subcellularLocation>
    <text evidence="1">Resides mostly in the nucleoli and relocalizes to the nucleoplasm upon DNA damage.</text>
</comment>
<comment type="PTM">
    <text evidence="1">Phosphorylated. Phosphorylation upon DNA damage induces relocalization to the nuclear plasma.</text>
</comment>
<comment type="similarity">
    <text evidence="1">Belongs to the XPG/RAD2 endonuclease family. FEN1 subfamily.</text>
</comment>
<sequence>MGIKQLSKLLRENSKRGIRERPLVYYSSKKVAIDASMSMYQFLIAVRSGGATLGNEDSPTSHLVGFFYRTIRMVELGITPVYVFDGVPPEIKMKELEKRKERRAAADREYREASEVGDKELMEMYDKRKTKVTGVHVDECKRLLGLMGIPFETAPSEAEAYCALLCKKKAVYGVATEDMDALTFGSPVVLRNFNGTQSKRLPVMEHNLPQILEDLSLDHSEFIDLCILLGCDYCSTLKGIGPKKALGLIKKHRSIGNILKNEDLEVPGDWRYSDAQKIFGSLAEIGEIRDFNISWDSIDRNGIVNFLVEEKGFDLERVNKGIDKLINSRKKGTQGRLDCFITRSK</sequence>
<organism>
    <name type="scientific">Encephalitozoon cuniculi (strain GB-M1)</name>
    <name type="common">Microsporidian parasite</name>
    <dbReference type="NCBI Taxonomy" id="284813"/>
    <lineage>
        <taxon>Eukaryota</taxon>
        <taxon>Fungi</taxon>
        <taxon>Fungi incertae sedis</taxon>
        <taxon>Microsporidia</taxon>
        <taxon>Unikaryonidae</taxon>
        <taxon>Encephalitozoon</taxon>
    </lineage>
</organism>
<accession>Q8SS91</accession>
<name>FEN1_ENCCU</name>
<proteinExistence type="inferred from homology"/>
<dbReference type="EC" id="3.1.-.-" evidence="1"/>
<dbReference type="EMBL" id="AL590443">
    <property type="protein sequence ID" value="CAD26252.1"/>
    <property type="molecule type" value="Genomic_DNA"/>
</dbReference>
<dbReference type="RefSeq" id="NP_597617.1">
    <property type="nucleotide sequence ID" value="NM_001040981.1"/>
</dbReference>
<dbReference type="SMR" id="Q8SS91"/>
<dbReference type="FunCoup" id="Q8SS91">
    <property type="interactions" value="326"/>
</dbReference>
<dbReference type="STRING" id="284813.Q8SS91"/>
<dbReference type="GeneID" id="858779"/>
<dbReference type="KEGG" id="ecu:ECU03_1080"/>
<dbReference type="VEuPathDB" id="MicrosporidiaDB:ECU03_1080"/>
<dbReference type="HOGENOM" id="CLU_032444_2_0_1"/>
<dbReference type="InParanoid" id="Q8SS91"/>
<dbReference type="OMA" id="IQEVHID"/>
<dbReference type="OrthoDB" id="1937206at2759"/>
<dbReference type="Proteomes" id="UP000000819">
    <property type="component" value="Chromosome III"/>
</dbReference>
<dbReference type="GO" id="GO:0005739">
    <property type="term" value="C:mitochondrion"/>
    <property type="evidence" value="ECO:0007669"/>
    <property type="project" value="UniProtKB-SubCell"/>
</dbReference>
<dbReference type="GO" id="GO:0005730">
    <property type="term" value="C:nucleolus"/>
    <property type="evidence" value="ECO:0007669"/>
    <property type="project" value="UniProtKB-SubCell"/>
</dbReference>
<dbReference type="GO" id="GO:0005654">
    <property type="term" value="C:nucleoplasm"/>
    <property type="evidence" value="ECO:0007669"/>
    <property type="project" value="UniProtKB-SubCell"/>
</dbReference>
<dbReference type="GO" id="GO:0008409">
    <property type="term" value="F:5'-3' exonuclease activity"/>
    <property type="evidence" value="ECO:0007669"/>
    <property type="project" value="UniProtKB-UniRule"/>
</dbReference>
<dbReference type="GO" id="GO:0017108">
    <property type="term" value="F:5'-flap endonuclease activity"/>
    <property type="evidence" value="ECO:0007669"/>
    <property type="project" value="UniProtKB-UniRule"/>
</dbReference>
<dbReference type="GO" id="GO:0003677">
    <property type="term" value="F:DNA binding"/>
    <property type="evidence" value="ECO:0007669"/>
    <property type="project" value="UniProtKB-UniRule"/>
</dbReference>
<dbReference type="GO" id="GO:0000287">
    <property type="term" value="F:magnesium ion binding"/>
    <property type="evidence" value="ECO:0007669"/>
    <property type="project" value="UniProtKB-UniRule"/>
</dbReference>
<dbReference type="GO" id="GO:0006284">
    <property type="term" value="P:base-excision repair"/>
    <property type="evidence" value="ECO:0007669"/>
    <property type="project" value="UniProtKB-UniRule"/>
</dbReference>
<dbReference type="GO" id="GO:0043137">
    <property type="term" value="P:DNA replication, removal of RNA primer"/>
    <property type="evidence" value="ECO:0007669"/>
    <property type="project" value="UniProtKB-UniRule"/>
</dbReference>
<dbReference type="CDD" id="cd09907">
    <property type="entry name" value="H3TH_FEN1-Euk"/>
    <property type="match status" value="1"/>
</dbReference>
<dbReference type="CDD" id="cd09867">
    <property type="entry name" value="PIN_FEN1"/>
    <property type="match status" value="1"/>
</dbReference>
<dbReference type="FunFam" id="1.10.150.20:FF:000009">
    <property type="entry name" value="Flap endonuclease 1"/>
    <property type="match status" value="1"/>
</dbReference>
<dbReference type="FunFam" id="3.40.50.1010:FF:000016">
    <property type="entry name" value="Flap endonuclease 1"/>
    <property type="match status" value="1"/>
</dbReference>
<dbReference type="Gene3D" id="1.10.150.20">
    <property type="entry name" value="5' to 3' exonuclease, C-terminal subdomain"/>
    <property type="match status" value="1"/>
</dbReference>
<dbReference type="Gene3D" id="3.40.50.1010">
    <property type="entry name" value="5'-nuclease"/>
    <property type="match status" value="1"/>
</dbReference>
<dbReference type="HAMAP" id="MF_00614">
    <property type="entry name" value="Fen"/>
    <property type="match status" value="1"/>
</dbReference>
<dbReference type="InterPro" id="IPR036279">
    <property type="entry name" value="5-3_exonuclease_C_sf"/>
</dbReference>
<dbReference type="InterPro" id="IPR023426">
    <property type="entry name" value="Flap_endonuc"/>
</dbReference>
<dbReference type="InterPro" id="IPR008918">
    <property type="entry name" value="HhH2"/>
</dbReference>
<dbReference type="InterPro" id="IPR029060">
    <property type="entry name" value="PIN-like_dom_sf"/>
</dbReference>
<dbReference type="InterPro" id="IPR006086">
    <property type="entry name" value="XPG-I_dom"/>
</dbReference>
<dbReference type="InterPro" id="IPR006084">
    <property type="entry name" value="XPG/Rad2"/>
</dbReference>
<dbReference type="InterPro" id="IPR006085">
    <property type="entry name" value="XPG_DNA_repair_N"/>
</dbReference>
<dbReference type="PANTHER" id="PTHR11081:SF9">
    <property type="entry name" value="FLAP ENDONUCLEASE 1"/>
    <property type="match status" value="1"/>
</dbReference>
<dbReference type="PANTHER" id="PTHR11081">
    <property type="entry name" value="FLAP ENDONUCLEASE FAMILY MEMBER"/>
    <property type="match status" value="1"/>
</dbReference>
<dbReference type="Pfam" id="PF00867">
    <property type="entry name" value="XPG_I"/>
    <property type="match status" value="1"/>
</dbReference>
<dbReference type="Pfam" id="PF00752">
    <property type="entry name" value="XPG_N"/>
    <property type="match status" value="1"/>
</dbReference>
<dbReference type="PRINTS" id="PR00853">
    <property type="entry name" value="XPGRADSUPER"/>
</dbReference>
<dbReference type="SMART" id="SM00279">
    <property type="entry name" value="HhH2"/>
    <property type="match status" value="1"/>
</dbReference>
<dbReference type="SMART" id="SM00484">
    <property type="entry name" value="XPGI"/>
    <property type="match status" value="1"/>
</dbReference>
<dbReference type="SMART" id="SM00485">
    <property type="entry name" value="XPGN"/>
    <property type="match status" value="1"/>
</dbReference>
<dbReference type="SUPFAM" id="SSF47807">
    <property type="entry name" value="5' to 3' exonuclease, C-terminal subdomain"/>
    <property type="match status" value="1"/>
</dbReference>
<dbReference type="SUPFAM" id="SSF88723">
    <property type="entry name" value="PIN domain-like"/>
    <property type="match status" value="1"/>
</dbReference>
<protein>
    <recommendedName>
        <fullName evidence="1">Flap endonuclease 1</fullName>
        <shortName evidence="1">FEN-1</shortName>
        <ecNumber evidence="1">3.1.-.-</ecNumber>
    </recommendedName>
    <alternativeName>
        <fullName evidence="1">Flap structure-specific endonuclease 1</fullName>
    </alternativeName>
</protein>
<keyword id="KW-0227">DNA damage</keyword>
<keyword id="KW-0234">DNA repair</keyword>
<keyword id="KW-0235">DNA replication</keyword>
<keyword id="KW-0255">Endonuclease</keyword>
<keyword id="KW-0269">Exonuclease</keyword>
<keyword id="KW-0378">Hydrolase</keyword>
<keyword id="KW-0460">Magnesium</keyword>
<keyword id="KW-0479">Metal-binding</keyword>
<keyword id="KW-0496">Mitochondrion</keyword>
<keyword id="KW-0540">Nuclease</keyword>
<keyword id="KW-0539">Nucleus</keyword>
<keyword id="KW-0597">Phosphoprotein</keyword>
<keyword id="KW-1185">Reference proteome</keyword>
<reference key="1">
    <citation type="journal article" date="2001" name="Nature">
        <title>Genome sequence and gene compaction of the eukaryote parasite Encephalitozoon cuniculi.</title>
        <authorList>
            <person name="Katinka M.D."/>
            <person name="Duprat S."/>
            <person name="Cornillot E."/>
            <person name="Metenier G."/>
            <person name="Thomarat F."/>
            <person name="Prensier G."/>
            <person name="Barbe V."/>
            <person name="Peyretaillade E."/>
            <person name="Brottier P."/>
            <person name="Wincker P."/>
            <person name="Delbac F."/>
            <person name="El Alaoui H."/>
            <person name="Peyret P."/>
            <person name="Saurin W."/>
            <person name="Gouy M."/>
            <person name="Weissenbach J."/>
            <person name="Vivares C.P."/>
        </authorList>
    </citation>
    <scope>NUCLEOTIDE SEQUENCE [LARGE SCALE GENOMIC DNA]</scope>
    <source>
        <strain>GB-M1</strain>
    </source>
</reference>